<gene>
    <name evidence="1" type="primary">trmD</name>
    <name type="ordered locus">BPEN_181</name>
</gene>
<accession>Q493M1</accession>
<protein>
    <recommendedName>
        <fullName evidence="1">tRNA (guanine-N(1)-)-methyltransferase</fullName>
        <ecNumber evidence="1">2.1.1.228</ecNumber>
    </recommendedName>
    <alternativeName>
        <fullName evidence="1">M1G-methyltransferase</fullName>
    </alternativeName>
    <alternativeName>
        <fullName evidence="1">tRNA [GM37] methyltransferase</fullName>
    </alternativeName>
</protein>
<name>TRMD_BLOPB</name>
<organism>
    <name type="scientific">Blochmanniella pennsylvanica (strain BPEN)</name>
    <dbReference type="NCBI Taxonomy" id="291272"/>
    <lineage>
        <taxon>Bacteria</taxon>
        <taxon>Pseudomonadati</taxon>
        <taxon>Pseudomonadota</taxon>
        <taxon>Gammaproteobacteria</taxon>
        <taxon>Enterobacterales</taxon>
        <taxon>Enterobacteriaceae</taxon>
        <taxon>ant endosymbionts</taxon>
        <taxon>Candidatus Blochmanniella</taxon>
    </lineage>
</organism>
<dbReference type="EC" id="2.1.1.228" evidence="1"/>
<dbReference type="EMBL" id="CP000016">
    <property type="protein sequence ID" value="AAZ40819.1"/>
    <property type="molecule type" value="Genomic_DNA"/>
</dbReference>
<dbReference type="RefSeq" id="WP_011282726.1">
    <property type="nucleotide sequence ID" value="NC_007292.1"/>
</dbReference>
<dbReference type="SMR" id="Q493M1"/>
<dbReference type="STRING" id="291272.BPEN_181"/>
<dbReference type="KEGG" id="bpn:BPEN_181"/>
<dbReference type="eggNOG" id="COG0336">
    <property type="taxonomic scope" value="Bacteria"/>
</dbReference>
<dbReference type="HOGENOM" id="CLU_047363_0_1_6"/>
<dbReference type="OrthoDB" id="9807416at2"/>
<dbReference type="Proteomes" id="UP000007794">
    <property type="component" value="Chromosome"/>
</dbReference>
<dbReference type="GO" id="GO:0005829">
    <property type="term" value="C:cytosol"/>
    <property type="evidence" value="ECO:0007669"/>
    <property type="project" value="TreeGrafter"/>
</dbReference>
<dbReference type="GO" id="GO:0052906">
    <property type="term" value="F:tRNA (guanine(37)-N1)-methyltransferase activity"/>
    <property type="evidence" value="ECO:0007669"/>
    <property type="project" value="UniProtKB-UniRule"/>
</dbReference>
<dbReference type="GO" id="GO:0002939">
    <property type="term" value="P:tRNA N1-guanine methylation"/>
    <property type="evidence" value="ECO:0007669"/>
    <property type="project" value="TreeGrafter"/>
</dbReference>
<dbReference type="CDD" id="cd18080">
    <property type="entry name" value="TrmD-like"/>
    <property type="match status" value="1"/>
</dbReference>
<dbReference type="FunFam" id="1.10.1270.20:FF:000001">
    <property type="entry name" value="tRNA (guanine-N(1)-)-methyltransferase"/>
    <property type="match status" value="1"/>
</dbReference>
<dbReference type="FunFam" id="3.40.1280.10:FF:000001">
    <property type="entry name" value="tRNA (guanine-N(1)-)-methyltransferase"/>
    <property type="match status" value="1"/>
</dbReference>
<dbReference type="Gene3D" id="3.40.1280.10">
    <property type="match status" value="1"/>
</dbReference>
<dbReference type="Gene3D" id="1.10.1270.20">
    <property type="entry name" value="tRNA(m1g37)methyltransferase, domain 2"/>
    <property type="match status" value="1"/>
</dbReference>
<dbReference type="HAMAP" id="MF_00605">
    <property type="entry name" value="TrmD"/>
    <property type="match status" value="1"/>
</dbReference>
<dbReference type="InterPro" id="IPR029028">
    <property type="entry name" value="Alpha/beta_knot_MTases"/>
</dbReference>
<dbReference type="InterPro" id="IPR023148">
    <property type="entry name" value="tRNA_m1G_MeTrfase_C_sf"/>
</dbReference>
<dbReference type="InterPro" id="IPR002649">
    <property type="entry name" value="tRNA_m1G_MeTrfase_TrmD"/>
</dbReference>
<dbReference type="InterPro" id="IPR029026">
    <property type="entry name" value="tRNA_m1G_MTases_N"/>
</dbReference>
<dbReference type="InterPro" id="IPR016009">
    <property type="entry name" value="tRNA_MeTrfase_TRMD/TRM10"/>
</dbReference>
<dbReference type="NCBIfam" id="NF000648">
    <property type="entry name" value="PRK00026.1"/>
    <property type="match status" value="1"/>
</dbReference>
<dbReference type="NCBIfam" id="TIGR00088">
    <property type="entry name" value="trmD"/>
    <property type="match status" value="1"/>
</dbReference>
<dbReference type="PANTHER" id="PTHR46417">
    <property type="entry name" value="TRNA (GUANINE-N(1)-)-METHYLTRANSFERASE"/>
    <property type="match status" value="1"/>
</dbReference>
<dbReference type="PANTHER" id="PTHR46417:SF1">
    <property type="entry name" value="TRNA (GUANINE-N(1)-)-METHYLTRANSFERASE"/>
    <property type="match status" value="1"/>
</dbReference>
<dbReference type="Pfam" id="PF01746">
    <property type="entry name" value="tRNA_m1G_MT"/>
    <property type="match status" value="1"/>
</dbReference>
<dbReference type="PIRSF" id="PIRSF000386">
    <property type="entry name" value="tRNA_mtase"/>
    <property type="match status" value="1"/>
</dbReference>
<dbReference type="SUPFAM" id="SSF75217">
    <property type="entry name" value="alpha/beta knot"/>
    <property type="match status" value="1"/>
</dbReference>
<reference key="1">
    <citation type="journal article" date="2005" name="Genome Res.">
        <title>Genome sequence of Blochmannia pennsylvanicus indicates parallel evolutionary trends among bacterial mutualists of insects.</title>
        <authorList>
            <person name="Degnan P.H."/>
            <person name="Lazarus A.B."/>
            <person name="Wernegreen J.J."/>
        </authorList>
    </citation>
    <scope>NUCLEOTIDE SEQUENCE [LARGE SCALE GENOMIC DNA]</scope>
    <source>
        <strain>BPEN</strain>
    </source>
</reference>
<evidence type="ECO:0000255" key="1">
    <source>
        <dbReference type="HAMAP-Rule" id="MF_00605"/>
    </source>
</evidence>
<sequence length="255" mass="29421">MLLGVITLFPDMFQSIVRYGIVGRAIRRGILSIKLWNPRLFTYDRHHSVDARPYGGGPGMLMMIEPLRNAINQAKDELGNNIKVIYLSPQGRKLKQKYVYKLAYDHQKLILVCGRYQGIDERLIQTEIDEEWSIGDYILSGGELAAMVLIDTISRVLPGVLGNQDSKESDSFSKERLDCPHYTRPETFDGMKVPSVLLSGNHDEIHRWKQKQALGRTWIKRPDLLNYIQLTNEEKNLLSEFKNEYLLSLNKKTRK</sequence>
<keyword id="KW-0963">Cytoplasm</keyword>
<keyword id="KW-0489">Methyltransferase</keyword>
<keyword id="KW-1185">Reference proteome</keyword>
<keyword id="KW-0949">S-adenosyl-L-methionine</keyword>
<keyword id="KW-0808">Transferase</keyword>
<keyword id="KW-0819">tRNA processing</keyword>
<proteinExistence type="inferred from homology"/>
<feature type="chain" id="PRO_0000257392" description="tRNA (guanine-N(1)-)-methyltransferase">
    <location>
        <begin position="1"/>
        <end position="255"/>
    </location>
</feature>
<feature type="binding site" evidence="1">
    <location>
        <position position="114"/>
    </location>
    <ligand>
        <name>S-adenosyl-L-methionine</name>
        <dbReference type="ChEBI" id="CHEBI:59789"/>
    </ligand>
</feature>
<feature type="binding site" evidence="1">
    <location>
        <begin position="134"/>
        <end position="139"/>
    </location>
    <ligand>
        <name>S-adenosyl-L-methionine</name>
        <dbReference type="ChEBI" id="CHEBI:59789"/>
    </ligand>
</feature>
<comment type="function">
    <text evidence="1">Specifically methylates guanosine-37 in various tRNAs.</text>
</comment>
<comment type="catalytic activity">
    <reaction evidence="1">
        <text>guanosine(37) in tRNA + S-adenosyl-L-methionine = N(1)-methylguanosine(37) in tRNA + S-adenosyl-L-homocysteine + H(+)</text>
        <dbReference type="Rhea" id="RHEA:36899"/>
        <dbReference type="Rhea" id="RHEA-COMP:10145"/>
        <dbReference type="Rhea" id="RHEA-COMP:10147"/>
        <dbReference type="ChEBI" id="CHEBI:15378"/>
        <dbReference type="ChEBI" id="CHEBI:57856"/>
        <dbReference type="ChEBI" id="CHEBI:59789"/>
        <dbReference type="ChEBI" id="CHEBI:73542"/>
        <dbReference type="ChEBI" id="CHEBI:74269"/>
        <dbReference type="EC" id="2.1.1.228"/>
    </reaction>
</comment>
<comment type="subunit">
    <text evidence="1">Homodimer.</text>
</comment>
<comment type="subcellular location">
    <subcellularLocation>
        <location evidence="1">Cytoplasm</location>
    </subcellularLocation>
</comment>
<comment type="similarity">
    <text evidence="1">Belongs to the RNA methyltransferase TrmD family.</text>
</comment>